<accession>A8H1B4</accession>
<organism>
    <name type="scientific">Shewanella pealeana (strain ATCC 700345 / ANG-SQ1)</name>
    <dbReference type="NCBI Taxonomy" id="398579"/>
    <lineage>
        <taxon>Bacteria</taxon>
        <taxon>Pseudomonadati</taxon>
        <taxon>Pseudomonadota</taxon>
        <taxon>Gammaproteobacteria</taxon>
        <taxon>Alteromonadales</taxon>
        <taxon>Shewanellaceae</taxon>
        <taxon>Shewanella</taxon>
    </lineage>
</organism>
<reference key="1">
    <citation type="submission" date="2007-10" db="EMBL/GenBank/DDBJ databases">
        <title>Complete sequence of Shewanella pealeana ATCC 700345.</title>
        <authorList>
            <consortium name="US DOE Joint Genome Institute"/>
            <person name="Copeland A."/>
            <person name="Lucas S."/>
            <person name="Lapidus A."/>
            <person name="Barry K."/>
            <person name="Glavina del Rio T."/>
            <person name="Dalin E."/>
            <person name="Tice H."/>
            <person name="Pitluck S."/>
            <person name="Chertkov O."/>
            <person name="Brettin T."/>
            <person name="Bruce D."/>
            <person name="Detter J.C."/>
            <person name="Han C."/>
            <person name="Schmutz J."/>
            <person name="Larimer F."/>
            <person name="Land M."/>
            <person name="Hauser L."/>
            <person name="Kyrpides N."/>
            <person name="Kim E."/>
            <person name="Zhao J.-S.Z."/>
            <person name="Manno D."/>
            <person name="Hawari J."/>
            <person name="Richardson P."/>
        </authorList>
    </citation>
    <scope>NUCLEOTIDE SEQUENCE [LARGE SCALE GENOMIC DNA]</scope>
    <source>
        <strain>ATCC 700345 / ANG-SQ1</strain>
    </source>
</reference>
<sequence>MKQYLDLCQRLIDEGTWVENSRTGKRCLTVINADLVYHVDKNEFPLITTRKSFYKAAIAELLGYIRGYDNAADFRAIGCNTWNANANDNQAWLDNPHRKGIDDMGRVYGVQGRAWSKPDGGCIDQLRKIVDDLSKGIDDRGEILSFYNPGEFHMGCLRPCMHTHNFSLVGDTLHLTSFQRSCDVPLGLNFNQVQVFTLLALMAQITGHKPGTAFHKIVNAHIYEDQLELMQEVQLKREPFTSPKLVINPNIKSLEDLETWVSIDDFEVTGYEHHEAISYPFSV</sequence>
<dbReference type="EC" id="2.1.1.45" evidence="1"/>
<dbReference type="EMBL" id="CP000851">
    <property type="protein sequence ID" value="ABV86351.1"/>
    <property type="molecule type" value="Genomic_DNA"/>
</dbReference>
<dbReference type="RefSeq" id="WP_012154282.1">
    <property type="nucleotide sequence ID" value="NC_009901.1"/>
</dbReference>
<dbReference type="SMR" id="A8H1B4"/>
<dbReference type="STRING" id="398579.Spea_1024"/>
<dbReference type="KEGG" id="spl:Spea_1024"/>
<dbReference type="eggNOG" id="COG0207">
    <property type="taxonomic scope" value="Bacteria"/>
</dbReference>
<dbReference type="HOGENOM" id="CLU_021669_0_1_6"/>
<dbReference type="OrthoDB" id="9774633at2"/>
<dbReference type="UniPathway" id="UPA00575"/>
<dbReference type="Proteomes" id="UP000002608">
    <property type="component" value="Chromosome"/>
</dbReference>
<dbReference type="GO" id="GO:0005829">
    <property type="term" value="C:cytosol"/>
    <property type="evidence" value="ECO:0007669"/>
    <property type="project" value="TreeGrafter"/>
</dbReference>
<dbReference type="GO" id="GO:0004799">
    <property type="term" value="F:thymidylate synthase activity"/>
    <property type="evidence" value="ECO:0007669"/>
    <property type="project" value="UniProtKB-UniRule"/>
</dbReference>
<dbReference type="GO" id="GO:0006231">
    <property type="term" value="P:dTMP biosynthetic process"/>
    <property type="evidence" value="ECO:0007669"/>
    <property type="project" value="UniProtKB-UniRule"/>
</dbReference>
<dbReference type="GO" id="GO:0006235">
    <property type="term" value="P:dTTP biosynthetic process"/>
    <property type="evidence" value="ECO:0007669"/>
    <property type="project" value="UniProtKB-UniRule"/>
</dbReference>
<dbReference type="GO" id="GO:0032259">
    <property type="term" value="P:methylation"/>
    <property type="evidence" value="ECO:0007669"/>
    <property type="project" value="UniProtKB-KW"/>
</dbReference>
<dbReference type="CDD" id="cd00351">
    <property type="entry name" value="TS_Pyrimidine_HMase"/>
    <property type="match status" value="1"/>
</dbReference>
<dbReference type="Gene3D" id="3.30.572.10">
    <property type="entry name" value="Thymidylate synthase/dCMP hydroxymethylase domain"/>
    <property type="match status" value="1"/>
</dbReference>
<dbReference type="HAMAP" id="MF_00008">
    <property type="entry name" value="Thymidy_synth_bact"/>
    <property type="match status" value="1"/>
</dbReference>
<dbReference type="InterPro" id="IPR045097">
    <property type="entry name" value="Thymidate_synth/dCMP_Mease"/>
</dbReference>
<dbReference type="InterPro" id="IPR023451">
    <property type="entry name" value="Thymidate_synth/dCMP_Mease_dom"/>
</dbReference>
<dbReference type="InterPro" id="IPR036926">
    <property type="entry name" value="Thymidate_synth/dCMP_Mease_sf"/>
</dbReference>
<dbReference type="InterPro" id="IPR000398">
    <property type="entry name" value="Thymidylate_synthase"/>
</dbReference>
<dbReference type="NCBIfam" id="NF002498">
    <property type="entry name" value="PRK01827.1-4"/>
    <property type="match status" value="1"/>
</dbReference>
<dbReference type="NCBIfam" id="TIGR03284">
    <property type="entry name" value="thym_sym"/>
    <property type="match status" value="1"/>
</dbReference>
<dbReference type="PANTHER" id="PTHR11548:SF9">
    <property type="entry name" value="THYMIDYLATE SYNTHASE"/>
    <property type="match status" value="1"/>
</dbReference>
<dbReference type="PANTHER" id="PTHR11548">
    <property type="entry name" value="THYMIDYLATE SYNTHASE 1"/>
    <property type="match status" value="1"/>
</dbReference>
<dbReference type="Pfam" id="PF00303">
    <property type="entry name" value="Thymidylat_synt"/>
    <property type="match status" value="1"/>
</dbReference>
<dbReference type="PRINTS" id="PR00108">
    <property type="entry name" value="THYMDSNTHASE"/>
</dbReference>
<dbReference type="SUPFAM" id="SSF55831">
    <property type="entry name" value="Thymidylate synthase/dCMP hydroxymethylase"/>
    <property type="match status" value="1"/>
</dbReference>
<keyword id="KW-0963">Cytoplasm</keyword>
<keyword id="KW-0489">Methyltransferase</keyword>
<keyword id="KW-0545">Nucleotide biosynthesis</keyword>
<keyword id="KW-1185">Reference proteome</keyword>
<keyword id="KW-0808">Transferase</keyword>
<proteinExistence type="inferred from homology"/>
<comment type="function">
    <text evidence="1">Catalyzes the reductive methylation of 2'-deoxyuridine-5'-monophosphate (dUMP) to 2'-deoxythymidine-5'-monophosphate (dTMP) while utilizing 5,10-methylenetetrahydrofolate (mTHF) as the methyl donor and reductant in the reaction, yielding dihydrofolate (DHF) as a by-product. This enzymatic reaction provides an intracellular de novo source of dTMP, an essential precursor for DNA biosynthesis.</text>
</comment>
<comment type="catalytic activity">
    <reaction evidence="1">
        <text>dUMP + (6R)-5,10-methylene-5,6,7,8-tetrahydrofolate = 7,8-dihydrofolate + dTMP</text>
        <dbReference type="Rhea" id="RHEA:12104"/>
        <dbReference type="ChEBI" id="CHEBI:15636"/>
        <dbReference type="ChEBI" id="CHEBI:57451"/>
        <dbReference type="ChEBI" id="CHEBI:63528"/>
        <dbReference type="ChEBI" id="CHEBI:246422"/>
        <dbReference type="EC" id="2.1.1.45"/>
    </reaction>
</comment>
<comment type="pathway">
    <text evidence="1">Pyrimidine metabolism; dTTP biosynthesis.</text>
</comment>
<comment type="subunit">
    <text evidence="1">Homodimer.</text>
</comment>
<comment type="subcellular location">
    <subcellularLocation>
        <location evidence="1">Cytoplasm</location>
    </subcellularLocation>
</comment>
<comment type="similarity">
    <text evidence="1">Belongs to the thymidylate synthase family. Bacterial-type ThyA subfamily.</text>
</comment>
<protein>
    <recommendedName>
        <fullName evidence="1">Thymidylate synthase</fullName>
        <shortName evidence="1">TS</shortName>
        <shortName evidence="1">TSase</shortName>
        <ecNumber evidence="1">2.1.1.45</ecNumber>
    </recommendedName>
</protein>
<evidence type="ECO:0000255" key="1">
    <source>
        <dbReference type="HAMAP-Rule" id="MF_00008"/>
    </source>
</evidence>
<feature type="chain" id="PRO_1000073885" description="Thymidylate synthase">
    <location>
        <begin position="1"/>
        <end position="283"/>
    </location>
</feature>
<feature type="active site" description="Nucleophile" evidence="1">
    <location>
        <position position="160"/>
    </location>
</feature>
<feature type="binding site" evidence="1">
    <location>
        <position position="22"/>
    </location>
    <ligand>
        <name>dUMP</name>
        <dbReference type="ChEBI" id="CHEBI:246422"/>
    </ligand>
</feature>
<feature type="binding site" evidence="1">
    <location>
        <begin position="180"/>
        <end position="183"/>
    </location>
    <ligand>
        <name>dUMP</name>
        <dbReference type="ChEBI" id="CHEBI:246422"/>
    </ligand>
</feature>
<feature type="binding site" evidence="1">
    <location>
        <position position="183"/>
    </location>
    <ligand>
        <name>(6R)-5,10-methylene-5,6,7,8-tetrahydrofolate</name>
        <dbReference type="ChEBI" id="CHEBI:15636"/>
    </ligand>
</feature>
<feature type="binding site" evidence="1">
    <location>
        <position position="191"/>
    </location>
    <ligand>
        <name>dUMP</name>
        <dbReference type="ChEBI" id="CHEBI:246422"/>
    </ligand>
</feature>
<feature type="binding site" evidence="1">
    <location>
        <begin position="221"/>
        <end position="223"/>
    </location>
    <ligand>
        <name>dUMP</name>
        <dbReference type="ChEBI" id="CHEBI:246422"/>
    </ligand>
</feature>
<feature type="binding site" evidence="1">
    <location>
        <position position="282"/>
    </location>
    <ligand>
        <name>(6R)-5,10-methylene-5,6,7,8-tetrahydrofolate</name>
        <dbReference type="ChEBI" id="CHEBI:15636"/>
    </ligand>
</feature>
<name>TYSY_SHEPA</name>
<gene>
    <name evidence="1" type="primary">thyA</name>
    <name type="ordered locus">Spea_1024</name>
</gene>